<feature type="signal peptide" evidence="1">
    <location>
        <begin position="1"/>
        <end position="26"/>
    </location>
</feature>
<feature type="chain" id="PRO_1000082416" description="Photosystem II extrinsic protein U">
    <location>
        <begin position="27"/>
        <end position="135"/>
    </location>
</feature>
<organism>
    <name type="scientific">Microcystis aeruginosa (strain NIES-843 / IAM M-2473)</name>
    <dbReference type="NCBI Taxonomy" id="449447"/>
    <lineage>
        <taxon>Bacteria</taxon>
        <taxon>Bacillati</taxon>
        <taxon>Cyanobacteriota</taxon>
        <taxon>Cyanophyceae</taxon>
        <taxon>Oscillatoriophycideae</taxon>
        <taxon>Chroococcales</taxon>
        <taxon>Microcystaceae</taxon>
        <taxon>Microcystis</taxon>
    </lineage>
</organism>
<gene>
    <name evidence="1" type="primary">psbU</name>
    <name type="ordered locus">MAE_36490</name>
</gene>
<dbReference type="EMBL" id="AP009552">
    <property type="protein sequence ID" value="BAG03471.1"/>
    <property type="molecule type" value="Genomic_DNA"/>
</dbReference>
<dbReference type="RefSeq" id="WP_012266475.1">
    <property type="nucleotide sequence ID" value="NC_010296.1"/>
</dbReference>
<dbReference type="SMR" id="B0JNP1"/>
<dbReference type="STRING" id="449447.MAE_36490"/>
<dbReference type="PaxDb" id="449447-MAE_36490"/>
<dbReference type="EnsemblBacteria" id="BAG03471">
    <property type="protein sequence ID" value="BAG03471"/>
    <property type="gene ID" value="MAE_36490"/>
</dbReference>
<dbReference type="KEGG" id="mar:MAE_36490"/>
<dbReference type="PATRIC" id="fig|449447.4.peg.3304"/>
<dbReference type="eggNOG" id="COG1555">
    <property type="taxonomic scope" value="Bacteria"/>
</dbReference>
<dbReference type="HOGENOM" id="CLU_141240_1_0_3"/>
<dbReference type="BioCyc" id="MAER449447:MAE_RS15785-MONOMER"/>
<dbReference type="Proteomes" id="UP000001510">
    <property type="component" value="Chromosome"/>
</dbReference>
<dbReference type="GO" id="GO:0019898">
    <property type="term" value="C:extrinsic component of membrane"/>
    <property type="evidence" value="ECO:0007669"/>
    <property type="project" value="InterPro"/>
</dbReference>
<dbReference type="GO" id="GO:0009654">
    <property type="term" value="C:photosystem II oxygen evolving complex"/>
    <property type="evidence" value="ECO:0007669"/>
    <property type="project" value="InterPro"/>
</dbReference>
<dbReference type="GO" id="GO:0031676">
    <property type="term" value="C:plasma membrane-derived thylakoid membrane"/>
    <property type="evidence" value="ECO:0007669"/>
    <property type="project" value="UniProtKB-SubCell"/>
</dbReference>
<dbReference type="GO" id="GO:0015979">
    <property type="term" value="P:photosynthesis"/>
    <property type="evidence" value="ECO:0007669"/>
    <property type="project" value="UniProtKB-UniRule"/>
</dbReference>
<dbReference type="GO" id="GO:0042549">
    <property type="term" value="P:photosystem II stabilization"/>
    <property type="evidence" value="ECO:0007669"/>
    <property type="project" value="InterPro"/>
</dbReference>
<dbReference type="Gene3D" id="1.10.150.320">
    <property type="entry name" value="Photosystem II 12 kDa extrinsic protein"/>
    <property type="match status" value="1"/>
</dbReference>
<dbReference type="HAMAP" id="MF_00589">
    <property type="entry name" value="PSII_PsbU"/>
    <property type="match status" value="1"/>
</dbReference>
<dbReference type="InterPro" id="IPR010527">
    <property type="entry name" value="PSII_PsbU"/>
</dbReference>
<dbReference type="NCBIfam" id="NF002708">
    <property type="entry name" value="PRK02515.1"/>
    <property type="match status" value="1"/>
</dbReference>
<dbReference type="Pfam" id="PF06514">
    <property type="entry name" value="PsbU"/>
    <property type="match status" value="1"/>
</dbReference>
<dbReference type="SUPFAM" id="SSF81585">
    <property type="entry name" value="PsbU/PolX domain-like"/>
    <property type="match status" value="1"/>
</dbReference>
<proteinExistence type="inferred from homology"/>
<accession>B0JNP1</accession>
<comment type="function">
    <text evidence="1">One of the extrinsic, lumenal subunits of photosystem II (PSII). PSII is a light-driven water plastoquinone oxidoreductase, using light energy to abstract electrons from H(2)O, generating a proton gradient subsequently used for ATP formation. The extrinsic proteins stabilize the structure of photosystem II oxygen-evolving complex (OEC), the ion environment of oxygen evolution and protect the OEC against heat-induced inactivation.</text>
</comment>
<comment type="subunit">
    <text evidence="1">PSII is composed of 1 copy each of membrane proteins PsbA, PsbB, PsbC, PsbD, PsbE, PsbF, PsbH, PsbI, PsbJ, PsbK, PsbL, PsbM, PsbT, PsbX, PsbY, PsbZ, Psb30/Ycf12, peripheral proteins PsbO, CyanoQ (PsbQ), PsbU, PsbV and a large number of cofactors. It forms dimeric complexes.</text>
</comment>
<comment type="subcellular location">
    <subcellularLocation>
        <location evidence="1">Cellular thylakoid membrane</location>
        <topology evidence="1">Peripheral membrane protein</topology>
        <orientation evidence="1">Lumenal side</orientation>
    </subcellularLocation>
</comment>
<comment type="similarity">
    <text evidence="1">Belongs to the PsbU family.</text>
</comment>
<sequence>MKNLVRLLAVIALIIGSFWGKVPAQALNLTSIALPSLPVAVLNAADAKLTTEFGAKIDLNNSDIRDFRDLRGFYPNLAGKIIKNAPYEEVEDVLNIPGLSDTQKERLQANLEKFTVTEPSKEFIEGDDRFNPGVY</sequence>
<name>PSBU_MICAN</name>
<keyword id="KW-0249">Electron transport</keyword>
<keyword id="KW-0472">Membrane</keyword>
<keyword id="KW-0602">Photosynthesis</keyword>
<keyword id="KW-0604">Photosystem II</keyword>
<keyword id="KW-0732">Signal</keyword>
<keyword id="KW-0793">Thylakoid</keyword>
<keyword id="KW-0813">Transport</keyword>
<protein>
    <recommendedName>
        <fullName evidence="1">Photosystem II extrinsic protein U</fullName>
        <shortName evidence="1">PSII-U</shortName>
        <shortName evidence="1">PsbU</shortName>
    </recommendedName>
    <alternativeName>
        <fullName evidence="1">Photosystem II 12 kDa extrinsic protein</fullName>
        <shortName evidence="1">PS II complex 12 kDa extrinsic protein</shortName>
    </alternativeName>
</protein>
<evidence type="ECO:0000255" key="1">
    <source>
        <dbReference type="HAMAP-Rule" id="MF_00589"/>
    </source>
</evidence>
<reference key="1">
    <citation type="journal article" date="2007" name="DNA Res.">
        <title>Complete genomic structure of the bloom-forming toxic cyanobacterium Microcystis aeruginosa NIES-843.</title>
        <authorList>
            <person name="Kaneko T."/>
            <person name="Nakajima N."/>
            <person name="Okamoto S."/>
            <person name="Suzuki I."/>
            <person name="Tanabe Y."/>
            <person name="Tamaoki M."/>
            <person name="Nakamura Y."/>
            <person name="Kasai F."/>
            <person name="Watanabe A."/>
            <person name="Kawashima K."/>
            <person name="Kishida Y."/>
            <person name="Ono A."/>
            <person name="Shimizu Y."/>
            <person name="Takahashi C."/>
            <person name="Minami C."/>
            <person name="Fujishiro T."/>
            <person name="Kohara M."/>
            <person name="Katoh M."/>
            <person name="Nakazaki N."/>
            <person name="Nakayama S."/>
            <person name="Yamada M."/>
            <person name="Tabata S."/>
            <person name="Watanabe M.M."/>
        </authorList>
    </citation>
    <scope>NUCLEOTIDE SEQUENCE [LARGE SCALE GENOMIC DNA]</scope>
    <source>
        <strain>NIES-843 / IAM M-247</strain>
    </source>
</reference>